<accession>Q28989</accession>
<keyword id="KW-0025">Alternative splicing</keyword>
<keyword id="KW-0091">Biomineralization</keyword>
<keyword id="KW-0903">Direct protein sequencing</keyword>
<keyword id="KW-0272">Extracellular matrix</keyword>
<keyword id="KW-0325">Glycoprotein</keyword>
<keyword id="KW-0379">Hydroxylation</keyword>
<keyword id="KW-0597">Phosphoprotein</keyword>
<keyword id="KW-1185">Reference proteome</keyword>
<keyword id="KW-0964">Secreted</keyword>
<keyword id="KW-0732">Signal</keyword>
<proteinExistence type="evidence at protein level"/>
<organism>
    <name type="scientific">Sus scrofa</name>
    <name type="common">Pig</name>
    <dbReference type="NCBI Taxonomy" id="9823"/>
    <lineage>
        <taxon>Eukaryota</taxon>
        <taxon>Metazoa</taxon>
        <taxon>Chordata</taxon>
        <taxon>Craniata</taxon>
        <taxon>Vertebrata</taxon>
        <taxon>Euteleostomi</taxon>
        <taxon>Mammalia</taxon>
        <taxon>Eutheria</taxon>
        <taxon>Laurasiatheria</taxon>
        <taxon>Artiodactyla</taxon>
        <taxon>Suina</taxon>
        <taxon>Suidae</taxon>
        <taxon>Sus</taxon>
    </lineage>
</organism>
<feature type="signal peptide" evidence="2">
    <location>
        <begin position="1"/>
        <end position="26"/>
    </location>
</feature>
<feature type="chain" id="PRO_0000001194" description="Ameloblastin">
    <location>
        <begin position="27"/>
        <end position="421"/>
    </location>
</feature>
<feature type="region of interest" description="Disordered" evidence="1">
    <location>
        <begin position="104"/>
        <end position="126"/>
    </location>
</feature>
<feature type="region of interest" description="Disordered" evidence="1">
    <location>
        <begin position="264"/>
        <end position="311"/>
    </location>
</feature>
<feature type="region of interest" description="Disordered" evidence="1">
    <location>
        <begin position="333"/>
        <end position="421"/>
    </location>
</feature>
<feature type="compositionally biased region" description="Low complexity" evidence="1">
    <location>
        <begin position="113"/>
        <end position="125"/>
    </location>
</feature>
<feature type="compositionally biased region" description="Low complexity" evidence="1">
    <location>
        <begin position="339"/>
        <end position="350"/>
    </location>
</feature>
<feature type="compositionally biased region" description="Polar residues" evidence="1">
    <location>
        <begin position="388"/>
        <end position="410"/>
    </location>
</feature>
<feature type="compositionally biased region" description="Basic and acidic residues" evidence="1">
    <location>
        <begin position="411"/>
        <end position="421"/>
    </location>
</feature>
<feature type="modified residue" description="Hydroxyproline" evidence="2">
    <location>
        <position position="37"/>
    </location>
</feature>
<feature type="modified residue" description="Phosphoserine" evidence="2">
    <location>
        <position position="43"/>
    </location>
</feature>
<feature type="glycosylation site" description="O-linked (GalNAc...) serine" evidence="2">
    <location>
        <position position="112"/>
    </location>
</feature>
<feature type="splice variant" id="VSP_000225" description="In isoform 2." evidence="3">
    <location>
        <begin position="99"/>
        <end position="113"/>
    </location>
</feature>
<comment type="function">
    <text>Involved in the mineralization and structural organization of enamel.</text>
</comment>
<comment type="subcellular location">
    <subcellularLocation>
        <location>Secreted</location>
        <location>Extracellular space</location>
        <location>Extracellular matrix</location>
    </subcellularLocation>
</comment>
<comment type="alternative products">
    <event type="alternative splicing"/>
    <isoform>
        <id>Q28989-1</id>
        <name>1</name>
        <sequence type="displayed"/>
    </isoform>
    <isoform>
        <id>Q28989-2</id>
        <name>2</name>
        <sequence type="described" ref="VSP_000225"/>
    </isoform>
</comment>
<comment type="tissue specificity">
    <text>Ameloblast-specific. Located at the Tomes processes of secretory ameloblasts and in the sheath space between rod-interrod enamel.</text>
</comment>
<comment type="similarity">
    <text evidence="4">Belongs to the ameloblastin family.</text>
</comment>
<evidence type="ECO:0000256" key="1">
    <source>
        <dbReference type="SAM" id="MobiDB-lite"/>
    </source>
</evidence>
<evidence type="ECO:0000269" key="2">
    <source>
    </source>
</evidence>
<evidence type="ECO:0000303" key="3">
    <source>
    </source>
</evidence>
<evidence type="ECO:0000305" key="4"/>
<gene>
    <name type="primary">AMBN</name>
</gene>
<protein>
    <recommendedName>
        <fullName>Ameloblastin</fullName>
    </recommendedName>
    <alternativeName>
        <fullName>Sheathlin</fullName>
    </alternativeName>
</protein>
<reference key="1">
    <citation type="journal article" date="1997" name="J. Dent. Res.">
        <title>Sheathlin: cloning, cDNA/polypeptide sequences, and immunolocalization of porcine enamel sheath proteins.</title>
        <authorList>
            <person name="Hu C.C."/>
            <person name="Fukae M."/>
            <person name="Uchida T."/>
            <person name="Qian Q."/>
            <person name="Zhang C.H."/>
            <person name="Ryu O.H."/>
            <person name="Tanabe T."/>
            <person name="Yamakoshi Y."/>
            <person name="Murakami C."/>
            <person name="Dohi N."/>
            <person name="Shimizu M."/>
            <person name="Simmer J.P."/>
        </authorList>
    </citation>
    <scope>NUCLEOTIDE SEQUENCE [MRNA] (ISOFORMS 1 AND 2)</scope>
    <scope>PARTIAL PROTEIN SEQUENCE</scope>
</reference>
<reference key="2">
    <citation type="journal article" date="2007" name="J. Dent. Res.">
        <title>Splicing determines the glycosylation state of ameloblastin.</title>
        <authorList>
            <person name="Kobayashi K."/>
            <person name="Yamakoshi Y."/>
            <person name="Hu J.C."/>
            <person name="Gomi K."/>
            <person name="Arai T."/>
            <person name="Fukae M."/>
            <person name="Krebsbach P.H."/>
            <person name="Simmer J.P."/>
        </authorList>
    </citation>
    <scope>PROTEIN SEQUENCE OF 27-45</scope>
    <scope>PHOSPHORYLATION AT SER-43</scope>
    <scope>HYDROXYLATION AT PRO-37</scope>
    <scope>GLYCOSYLATION AT SER-112</scope>
</reference>
<sequence>MPALKIPLFKMKDMVLILCLLKMSSAVPAFPRQPGTPGVASLSLETMRQLGSLQGLNMLSQYSRFGFGKSFNSLWMHGLLPPHSSFQWMRPREHETQQYEYSLPVHPPPLPSQPSLQPQQPGQKPFLQPTVVTSIQNPVQKGVPQPPIYQGHPPLQQVEGPMVQQQVAPSEKPPEAELPGLDFADPQDPSMFPIARLISQGPVPQDKPSPLYPGMFYMSYGANQLNSPARLGILSSEEMAGGRGGPLAYGAMFPGFGGMRPNLGGMPPNSAKGGDFTLEFDSPAAGTKGPEKGEGGAEGSPVAEANTADPESPALFSEVASGVLGGLLANPKGKIPNLARGPAGRSRGPPGVTPADADPLMTPGLADAYETYGADETTTLGLQEEMTMDSTATPYSEHTSMPGNKAQQPQIKRDAWRFQEP</sequence>
<name>AMBN_PIG</name>
<dbReference type="EMBL" id="U43404">
    <property type="protein sequence ID" value="AAA85588.1"/>
    <property type="molecule type" value="mRNA"/>
</dbReference>
<dbReference type="RefSeq" id="NP_999202.1">
    <molecule id="Q28989-1"/>
    <property type="nucleotide sequence ID" value="NM_214037.1"/>
</dbReference>
<dbReference type="FunCoup" id="Q28989">
    <property type="interactions" value="125"/>
</dbReference>
<dbReference type="STRING" id="9823.ENSSSCP00000009536"/>
<dbReference type="GlyCosmos" id="Q28989">
    <property type="glycosylation" value="1 site, No reported glycans"/>
</dbReference>
<dbReference type="GlyGen" id="Q28989">
    <property type="glycosylation" value="2 sites"/>
</dbReference>
<dbReference type="iPTMnet" id="Q28989"/>
<dbReference type="PaxDb" id="9823-ENSSSCP00000009536"/>
<dbReference type="Ensembl" id="ENSSSCT00000009789.3">
    <molecule id="Q28989-1"/>
    <property type="protein sequence ID" value="ENSSSCP00000009536.1"/>
    <property type="gene ID" value="ENSSSCG00000008937.4"/>
</dbReference>
<dbReference type="Ensembl" id="ENSSSCT00015053638.1">
    <molecule id="Q28989-1"/>
    <property type="protein sequence ID" value="ENSSSCP00015021503.1"/>
    <property type="gene ID" value="ENSSSCG00015039943.1"/>
</dbReference>
<dbReference type="Ensembl" id="ENSSSCT00025052922.1">
    <molecule id="Q28989-1"/>
    <property type="protein sequence ID" value="ENSSSCP00025022555.1"/>
    <property type="gene ID" value="ENSSSCG00025038905.1"/>
</dbReference>
<dbReference type="Ensembl" id="ENSSSCT00030019756.1">
    <molecule id="Q28989-1"/>
    <property type="protein sequence ID" value="ENSSSCP00030008795.1"/>
    <property type="gene ID" value="ENSSSCG00030014345.1"/>
</dbReference>
<dbReference type="Ensembl" id="ENSSSCT00035102009.1">
    <molecule id="Q28989-1"/>
    <property type="protein sequence ID" value="ENSSSCP00035043475.1"/>
    <property type="gene ID" value="ENSSSCG00035075042.1"/>
</dbReference>
<dbReference type="Ensembl" id="ENSSSCT00040095398.1">
    <property type="protein sequence ID" value="ENSSSCP00040042261.1"/>
    <property type="gene ID" value="ENSSSCG00040069531.1"/>
</dbReference>
<dbReference type="Ensembl" id="ENSSSCT00045046846.1">
    <molecule id="Q28989-1"/>
    <property type="protein sequence ID" value="ENSSSCP00045032518.1"/>
    <property type="gene ID" value="ENSSSCG00045027395.1"/>
</dbReference>
<dbReference type="Ensembl" id="ENSSSCT00050083601.1">
    <molecule id="Q28989-1"/>
    <property type="protein sequence ID" value="ENSSSCP00050035887.1"/>
    <property type="gene ID" value="ENSSSCG00050061349.1"/>
</dbReference>
<dbReference type="Ensembl" id="ENSSSCT00055001828.1">
    <molecule id="Q28989-1"/>
    <property type="protein sequence ID" value="ENSSSCP00055001385.1"/>
    <property type="gene ID" value="ENSSSCG00055001024.1"/>
</dbReference>
<dbReference type="Ensembl" id="ENSSSCT00060046288.1">
    <molecule id="Q28989-1"/>
    <property type="protein sequence ID" value="ENSSSCP00060019818.1"/>
    <property type="gene ID" value="ENSSSCG00060034115.1"/>
</dbReference>
<dbReference type="Ensembl" id="ENSSSCT00065033259.1">
    <molecule id="Q28989-1"/>
    <property type="protein sequence ID" value="ENSSSCP00065013740.1"/>
    <property type="gene ID" value="ENSSSCG00065024870.1"/>
</dbReference>
<dbReference type="Ensembl" id="ENSSSCT00070016183.1">
    <molecule id="Q28989-1"/>
    <property type="protein sequence ID" value="ENSSSCP00070013398.1"/>
    <property type="gene ID" value="ENSSSCG00070008360.1"/>
</dbReference>
<dbReference type="Ensembl" id="ENSSSCT00090021920">
    <molecule id="Q28989-1"/>
    <property type="protein sequence ID" value="ENSSSCP00090013422"/>
    <property type="gene ID" value="ENSSSCG00090012495"/>
</dbReference>
<dbReference type="Ensembl" id="ENSSSCT00105054954">
    <molecule id="Q28989-1"/>
    <property type="protein sequence ID" value="ENSSSCP00105038677"/>
    <property type="gene ID" value="ENSSSCG00105028854"/>
</dbReference>
<dbReference type="Ensembl" id="ENSSSCT00110021434">
    <molecule id="Q28989-1"/>
    <property type="protein sequence ID" value="ENSSSCP00110014396"/>
    <property type="gene ID" value="ENSSSCG00110011190"/>
</dbReference>
<dbReference type="Ensembl" id="ENSSSCT00115029365">
    <molecule id="Q28989-1"/>
    <property type="protein sequence ID" value="ENSSSCP00115027875"/>
    <property type="gene ID" value="ENSSSCG00115016752"/>
</dbReference>
<dbReference type="Ensembl" id="ENSSSCT00130031179">
    <molecule id="Q28989-1"/>
    <property type="protein sequence ID" value="ENSSSCP00130021817"/>
    <property type="gene ID" value="ENSSSCG00130015705"/>
</dbReference>
<dbReference type="GeneID" id="397102"/>
<dbReference type="KEGG" id="ssc:397102"/>
<dbReference type="CTD" id="258"/>
<dbReference type="eggNOG" id="ENOG502QWCP">
    <property type="taxonomic scope" value="Eukaryota"/>
</dbReference>
<dbReference type="GeneTree" id="ENSGT00390000018227"/>
<dbReference type="HOGENOM" id="CLU_051782_0_0_1"/>
<dbReference type="InParanoid" id="Q28989"/>
<dbReference type="OMA" id="MPHKPAM"/>
<dbReference type="OrthoDB" id="9908655at2759"/>
<dbReference type="TreeFam" id="TF337860"/>
<dbReference type="Reactome" id="R-SSC-381426">
    <property type="pathway name" value="Regulation of Insulin-like Growth Factor (IGF) transport and uptake by Insulin-like Growth Factor Binding Proteins (IGFBPs)"/>
</dbReference>
<dbReference type="Reactome" id="R-SSC-8957275">
    <property type="pathway name" value="Post-translational protein phosphorylation"/>
</dbReference>
<dbReference type="Proteomes" id="UP000008227">
    <property type="component" value="Chromosome 8"/>
</dbReference>
<dbReference type="Proteomes" id="UP000314985">
    <property type="component" value="Chromosome 8"/>
</dbReference>
<dbReference type="Proteomes" id="UP000694570">
    <property type="component" value="Unplaced"/>
</dbReference>
<dbReference type="Proteomes" id="UP000694571">
    <property type="component" value="Unplaced"/>
</dbReference>
<dbReference type="Proteomes" id="UP000694720">
    <property type="component" value="Unplaced"/>
</dbReference>
<dbReference type="Proteomes" id="UP000694722">
    <property type="component" value="Unplaced"/>
</dbReference>
<dbReference type="Proteomes" id="UP000694723">
    <property type="component" value="Unplaced"/>
</dbReference>
<dbReference type="Proteomes" id="UP000694724">
    <property type="component" value="Unplaced"/>
</dbReference>
<dbReference type="Proteomes" id="UP000694725">
    <property type="component" value="Unplaced"/>
</dbReference>
<dbReference type="Proteomes" id="UP000694726">
    <property type="component" value="Unplaced"/>
</dbReference>
<dbReference type="Proteomes" id="UP000694727">
    <property type="component" value="Unplaced"/>
</dbReference>
<dbReference type="Proteomes" id="UP000694728">
    <property type="component" value="Unplaced"/>
</dbReference>
<dbReference type="Bgee" id="ENSSSCG00000008937">
    <property type="expression patterns" value="Expressed in forelimb bud and 32 other cell types or tissues"/>
</dbReference>
<dbReference type="ExpressionAtlas" id="Q28989">
    <property type="expression patterns" value="baseline and differential"/>
</dbReference>
<dbReference type="GO" id="GO:0005576">
    <property type="term" value="C:extracellular region"/>
    <property type="evidence" value="ECO:0007669"/>
    <property type="project" value="UniProtKB-KW"/>
</dbReference>
<dbReference type="GO" id="GO:0008083">
    <property type="term" value="F:growth factor activity"/>
    <property type="evidence" value="ECO:0000318"/>
    <property type="project" value="GO_Central"/>
</dbReference>
<dbReference type="GO" id="GO:0030345">
    <property type="term" value="F:structural constituent of tooth enamel"/>
    <property type="evidence" value="ECO:0007669"/>
    <property type="project" value="InterPro"/>
</dbReference>
<dbReference type="GO" id="GO:0031214">
    <property type="term" value="P:biomineral tissue development"/>
    <property type="evidence" value="ECO:0007669"/>
    <property type="project" value="UniProtKB-KW"/>
</dbReference>
<dbReference type="GO" id="GO:0007155">
    <property type="term" value="P:cell adhesion"/>
    <property type="evidence" value="ECO:0000318"/>
    <property type="project" value="GO_Central"/>
</dbReference>
<dbReference type="GO" id="GO:0042475">
    <property type="term" value="P:odontogenesis of dentin-containing tooth"/>
    <property type="evidence" value="ECO:0007669"/>
    <property type="project" value="InterPro"/>
</dbReference>
<dbReference type="InterPro" id="IPR007798">
    <property type="entry name" value="Amelin"/>
</dbReference>
<dbReference type="PANTHER" id="PTHR14115">
    <property type="entry name" value="AMELOBLASTIN"/>
    <property type="match status" value="1"/>
</dbReference>
<dbReference type="PANTHER" id="PTHR14115:SF0">
    <property type="entry name" value="AMELOBLASTIN"/>
    <property type="match status" value="1"/>
</dbReference>
<dbReference type="Pfam" id="PF05111">
    <property type="entry name" value="Amelin"/>
    <property type="match status" value="1"/>
</dbReference>
<dbReference type="SMART" id="SM00817">
    <property type="entry name" value="Amelin"/>
    <property type="match status" value="1"/>
</dbReference>